<proteinExistence type="inferred from homology"/>
<comment type="function">
    <text evidence="1">tRNA nucleus export receptor which facilitates tRNA translocation across the nuclear pore complex. Preferentially interacts with tRNAs with mature 5'- and 3'-termini and does not distinguish between intron-containing and spliced tRNAs. In the nucleus binds to tRNA and to the Ran-GTPases GSP1 or GSP2 in their active GTP-bound form. Docking of this trimeric complex to the nuclear pore complex (NPC) is mediated through binding to nucleoporins. Upon transit of a nuclear export complex into the cytoplasm, disassembling of the complex and hydrolysis of Ran-GTP to Ran-GDP cause release of the tRNA from the export receptor. The directionality of nuclear export is thought to be conferred by an asymmetric distribution of the GTP- and GDP-bound forms of Ran between the cytoplasm and nucleus. Involved in pre-tRNA splicing, probably by affecting the interaction of pre-tRNA with splicing endonuclease (By similarity).</text>
</comment>
<comment type="subunit">
    <text evidence="1">Interacts with GSP1, GSP2, NSP1, NUP2 and UTP8.</text>
</comment>
<comment type="subcellular location">
    <subcellularLocation>
        <location evidence="1">Nucleus</location>
    </subcellularLocation>
    <subcellularLocation>
        <location evidence="1">Cytoplasm</location>
    </subcellularLocation>
    <text evidence="1">The localization is regulated by SNF1 kinase, nutrient supply and stress.</text>
</comment>
<comment type="similarity">
    <text evidence="2">Belongs to the exportin family.</text>
</comment>
<keyword id="KW-0963">Cytoplasm</keyword>
<keyword id="KW-0539">Nucleus</keyword>
<keyword id="KW-0694">RNA-binding</keyword>
<keyword id="KW-0813">Transport</keyword>
<keyword id="KW-0819">tRNA processing</keyword>
<keyword id="KW-0820">tRNA-binding</keyword>
<feature type="chain" id="PRO_0000343110" description="Exportin-T">
    <location>
        <begin position="1"/>
        <end position="1100"/>
    </location>
</feature>
<dbReference type="EMBL" id="AAFW02000153">
    <property type="protein sequence ID" value="EDN59823.1"/>
    <property type="molecule type" value="Genomic_DNA"/>
</dbReference>
<dbReference type="SMR" id="A7A084"/>
<dbReference type="HOGENOM" id="CLU_004414_0_1_1"/>
<dbReference type="Proteomes" id="UP000007060">
    <property type="component" value="Unassembled WGS sequence"/>
</dbReference>
<dbReference type="GO" id="GO:0005737">
    <property type="term" value="C:cytoplasm"/>
    <property type="evidence" value="ECO:0007669"/>
    <property type="project" value="UniProtKB-SubCell"/>
</dbReference>
<dbReference type="GO" id="GO:0016363">
    <property type="term" value="C:nuclear matrix"/>
    <property type="evidence" value="ECO:0007669"/>
    <property type="project" value="TreeGrafter"/>
</dbReference>
<dbReference type="GO" id="GO:0005643">
    <property type="term" value="C:nuclear pore"/>
    <property type="evidence" value="ECO:0007669"/>
    <property type="project" value="TreeGrafter"/>
</dbReference>
<dbReference type="GO" id="GO:0031267">
    <property type="term" value="F:small GTPase binding"/>
    <property type="evidence" value="ECO:0007669"/>
    <property type="project" value="InterPro"/>
</dbReference>
<dbReference type="GO" id="GO:0000049">
    <property type="term" value="F:tRNA binding"/>
    <property type="evidence" value="ECO:0007669"/>
    <property type="project" value="UniProtKB-KW"/>
</dbReference>
<dbReference type="GO" id="GO:0008033">
    <property type="term" value="P:tRNA processing"/>
    <property type="evidence" value="ECO:0007669"/>
    <property type="project" value="UniProtKB-KW"/>
</dbReference>
<dbReference type="GO" id="GO:0071528">
    <property type="term" value="P:tRNA re-export from nucleus"/>
    <property type="evidence" value="ECO:0007669"/>
    <property type="project" value="InterPro"/>
</dbReference>
<dbReference type="FunFam" id="1.25.10.10:FF:000621">
    <property type="entry name" value="Exportin-T"/>
    <property type="match status" value="1"/>
</dbReference>
<dbReference type="Gene3D" id="1.25.10.10">
    <property type="entry name" value="Leucine-rich Repeat Variant"/>
    <property type="match status" value="1"/>
</dbReference>
<dbReference type="InterPro" id="IPR011989">
    <property type="entry name" value="ARM-like"/>
</dbReference>
<dbReference type="InterPro" id="IPR016024">
    <property type="entry name" value="ARM-type_fold"/>
</dbReference>
<dbReference type="InterPro" id="IPR013598">
    <property type="entry name" value="Exportin-1/Importin-b-like"/>
</dbReference>
<dbReference type="InterPro" id="IPR045546">
    <property type="entry name" value="Exportin-T_C"/>
</dbReference>
<dbReference type="InterPro" id="IPR040017">
    <property type="entry name" value="XPOT"/>
</dbReference>
<dbReference type="PANTHER" id="PTHR15952:SF11">
    <property type="entry name" value="EXPORTIN-T"/>
    <property type="match status" value="1"/>
</dbReference>
<dbReference type="PANTHER" id="PTHR15952">
    <property type="entry name" value="EXPORTIN-T/LOS1"/>
    <property type="match status" value="1"/>
</dbReference>
<dbReference type="Pfam" id="PF19282">
    <property type="entry name" value="Exportin-T"/>
    <property type="match status" value="2"/>
</dbReference>
<dbReference type="Pfam" id="PF08389">
    <property type="entry name" value="Xpo1"/>
    <property type="match status" value="1"/>
</dbReference>
<dbReference type="SUPFAM" id="SSF48371">
    <property type="entry name" value="ARM repeat"/>
    <property type="match status" value="1"/>
</dbReference>
<accession>A7A084</accession>
<evidence type="ECO:0000250" key="1"/>
<evidence type="ECO:0000305" key="2"/>
<reference key="1">
    <citation type="journal article" date="2007" name="Proc. Natl. Acad. Sci. U.S.A.">
        <title>Genome sequencing and comparative analysis of Saccharomyces cerevisiae strain YJM789.</title>
        <authorList>
            <person name="Wei W."/>
            <person name="McCusker J.H."/>
            <person name="Hyman R.W."/>
            <person name="Jones T."/>
            <person name="Ning Y."/>
            <person name="Cao Z."/>
            <person name="Gu Z."/>
            <person name="Bruno D."/>
            <person name="Miranda M."/>
            <person name="Nguyen M."/>
            <person name="Wilhelmy J."/>
            <person name="Komp C."/>
            <person name="Tamse R."/>
            <person name="Wang X."/>
            <person name="Jia P."/>
            <person name="Luedi P."/>
            <person name="Oefner P.J."/>
            <person name="David L."/>
            <person name="Dietrich F.S."/>
            <person name="Li Y."/>
            <person name="Davis R.W."/>
            <person name="Steinmetz L.M."/>
        </authorList>
    </citation>
    <scope>NUCLEOTIDE SEQUENCE [LARGE SCALE GENOMIC DNA]</scope>
    <source>
        <strain>YJM789</strain>
    </source>
</reference>
<sequence>MLERIQQLVNAVNDPRSDVATKRQAIELLNGIKSSENALEIFISLVINENSNDLLKFYGLSTLIELMTEGVNANPNGLNLVKFEITKWLKFQVLGNKQTKLPDFLMNKISEVLTTLFMLMYSDCNGNQWNSFFDDLMSLFQVDSAISNTSPSTDGNILLGLEFFNKLCLMINSEIADQSFIRSKESQLKNNNIKDWMRDNDIMKLSNVWFQCLKLDEQIVSQCPGLINSTLDCIGSFISWIDINLIIDANNYYLQLIYKFLNLKETKISCYNCILAIISKKMKPMDKLAFLNMINLTNELTYYHQAISMNPQIITFDNLEVWESLTKLITSFGIEFTIIIEQVNDDQKLDTLYKQSVISNVDSILLEKIIPILLEFMNNEFDSITAKTFPFWSNYLAFLKKYKASSPNFVPLHKDFLDNFQQICFKRMKFSDDEVTQDDFEEFNETVRFKLKNFQEIIVVIDPSLFLNNISQEISANLMNCKNESWQVFELTIYQIFNLSECIKNNYFGLNKNEIMTSQPSLTLVRFLNELLMMKDFLLAIDNEQIQILFMELIVKNYNFIFSTSANTANATDDDEKYLLILNIFMSSFAMFNKRENVRLRSWYLFTRFLKLTRINLKKILFANKNLVNEITNKISPLLHIKVTSINAQGTDDNDTIFDNQLYIFEGIGFIITLNNSSQELTAATANTPIDYDILDQILTPLFTQLEGCITQGASPVVILECHHILMAIGTLARGLHIGLVPENQVNNMVVNKKLINDSLIHKFSNIAEVILVTFSFFNKFENIRDASRFTFARLIPILSNKILPFINKLIELILSSTDLKSWEMIDFLGFLSQLIHMFHTDTDCYQLFNQLLTPLINKIHSIIEEIDEQHDQQSSSNKPIDTAVTATSVNKNIVVTDSYRDKILLKKAYCTFLQSFTNNSVTSILLSDINRAILPVILNDLVTYTPQEIQETSMMKVSLNVLCNFIKCFGNGTCLDNDDINKDPNLKIDGLNEYFIMKCVPIIFEIPFNPIYKFNIKEGSFKTMAYDLARLLRELFIVSSNPTTNENECVKYLTQIYLPQIQLPQELTIQLVNMLTTMGQKQFEKWFVDNFISVLKQGQ</sequence>
<name>XPOT_YEAS7</name>
<gene>
    <name type="primary">LOS1</name>
    <name type="ORF">SCY_3494</name>
</gene>
<organism>
    <name type="scientific">Saccharomyces cerevisiae (strain YJM789)</name>
    <name type="common">Baker's yeast</name>
    <dbReference type="NCBI Taxonomy" id="307796"/>
    <lineage>
        <taxon>Eukaryota</taxon>
        <taxon>Fungi</taxon>
        <taxon>Dikarya</taxon>
        <taxon>Ascomycota</taxon>
        <taxon>Saccharomycotina</taxon>
        <taxon>Saccharomycetes</taxon>
        <taxon>Saccharomycetales</taxon>
        <taxon>Saccharomycetaceae</taxon>
        <taxon>Saccharomyces</taxon>
    </lineage>
</organism>
<protein>
    <recommendedName>
        <fullName>Exportin-T</fullName>
    </recommendedName>
    <alternativeName>
        <fullName>Exportin(tRNA)</fullName>
    </alternativeName>
    <alternativeName>
        <fullName>Karyopherin-beta</fullName>
    </alternativeName>
    <alternativeName>
        <fullName>tRNA exportin</fullName>
    </alternativeName>
</protein>